<proteinExistence type="inferred from homology"/>
<dbReference type="EMBL" id="AL935263">
    <property type="protein sequence ID" value="CCC78459.1"/>
    <property type="molecule type" value="Genomic_DNA"/>
</dbReference>
<dbReference type="RefSeq" id="WP_003641259.1">
    <property type="nucleotide sequence ID" value="NC_004567.2"/>
</dbReference>
<dbReference type="RefSeq" id="YP_004888973.1">
    <property type="nucleotide sequence ID" value="NC_004567.2"/>
</dbReference>
<dbReference type="SMR" id="Q88XX1"/>
<dbReference type="STRING" id="220668.lp_1051"/>
<dbReference type="EnsemblBacteria" id="CCC78459">
    <property type="protein sequence ID" value="CCC78459"/>
    <property type="gene ID" value="lp_1051"/>
</dbReference>
<dbReference type="GeneID" id="89668562"/>
<dbReference type="KEGG" id="lpl:lp_1051"/>
<dbReference type="PATRIC" id="fig|220668.9.peg.886"/>
<dbReference type="eggNOG" id="COG0097">
    <property type="taxonomic scope" value="Bacteria"/>
</dbReference>
<dbReference type="HOGENOM" id="CLU_065464_1_2_9"/>
<dbReference type="OrthoDB" id="9805007at2"/>
<dbReference type="PhylomeDB" id="Q88XX1"/>
<dbReference type="Proteomes" id="UP000000432">
    <property type="component" value="Chromosome"/>
</dbReference>
<dbReference type="GO" id="GO:0022625">
    <property type="term" value="C:cytosolic large ribosomal subunit"/>
    <property type="evidence" value="ECO:0007669"/>
    <property type="project" value="TreeGrafter"/>
</dbReference>
<dbReference type="GO" id="GO:0019843">
    <property type="term" value="F:rRNA binding"/>
    <property type="evidence" value="ECO:0007669"/>
    <property type="project" value="UniProtKB-UniRule"/>
</dbReference>
<dbReference type="GO" id="GO:0003735">
    <property type="term" value="F:structural constituent of ribosome"/>
    <property type="evidence" value="ECO:0007669"/>
    <property type="project" value="InterPro"/>
</dbReference>
<dbReference type="GO" id="GO:0002181">
    <property type="term" value="P:cytoplasmic translation"/>
    <property type="evidence" value="ECO:0007669"/>
    <property type="project" value="TreeGrafter"/>
</dbReference>
<dbReference type="FunFam" id="3.90.930.12:FF:000001">
    <property type="entry name" value="50S ribosomal protein L6"/>
    <property type="match status" value="1"/>
</dbReference>
<dbReference type="FunFam" id="3.90.930.12:FF:000002">
    <property type="entry name" value="50S ribosomal protein L6"/>
    <property type="match status" value="1"/>
</dbReference>
<dbReference type="Gene3D" id="3.90.930.12">
    <property type="entry name" value="Ribosomal protein L6, alpha-beta domain"/>
    <property type="match status" value="2"/>
</dbReference>
<dbReference type="HAMAP" id="MF_01365_B">
    <property type="entry name" value="Ribosomal_uL6_B"/>
    <property type="match status" value="1"/>
</dbReference>
<dbReference type="InterPro" id="IPR000702">
    <property type="entry name" value="Ribosomal_uL6-like"/>
</dbReference>
<dbReference type="InterPro" id="IPR036789">
    <property type="entry name" value="Ribosomal_uL6-like_a/b-dom_sf"/>
</dbReference>
<dbReference type="InterPro" id="IPR020040">
    <property type="entry name" value="Ribosomal_uL6_a/b-dom"/>
</dbReference>
<dbReference type="InterPro" id="IPR019906">
    <property type="entry name" value="Ribosomal_uL6_bac-type"/>
</dbReference>
<dbReference type="InterPro" id="IPR002358">
    <property type="entry name" value="Ribosomal_uL6_CS"/>
</dbReference>
<dbReference type="NCBIfam" id="TIGR03654">
    <property type="entry name" value="L6_bact"/>
    <property type="match status" value="1"/>
</dbReference>
<dbReference type="PANTHER" id="PTHR11655">
    <property type="entry name" value="60S/50S RIBOSOMAL PROTEIN L6/L9"/>
    <property type="match status" value="1"/>
</dbReference>
<dbReference type="PANTHER" id="PTHR11655:SF14">
    <property type="entry name" value="LARGE RIBOSOMAL SUBUNIT PROTEIN UL6M"/>
    <property type="match status" value="1"/>
</dbReference>
<dbReference type="Pfam" id="PF00347">
    <property type="entry name" value="Ribosomal_L6"/>
    <property type="match status" value="2"/>
</dbReference>
<dbReference type="PIRSF" id="PIRSF002162">
    <property type="entry name" value="Ribosomal_L6"/>
    <property type="match status" value="1"/>
</dbReference>
<dbReference type="PRINTS" id="PR00059">
    <property type="entry name" value="RIBOSOMALL6"/>
</dbReference>
<dbReference type="SUPFAM" id="SSF56053">
    <property type="entry name" value="Ribosomal protein L6"/>
    <property type="match status" value="2"/>
</dbReference>
<dbReference type="PROSITE" id="PS00525">
    <property type="entry name" value="RIBOSOMAL_L6_1"/>
    <property type="match status" value="1"/>
</dbReference>
<feature type="chain" id="PRO_0000260881" description="Large ribosomal subunit protein uL6">
    <location>
        <begin position="1"/>
        <end position="178"/>
    </location>
</feature>
<reference key="1">
    <citation type="journal article" date="2003" name="Proc. Natl. Acad. Sci. U.S.A.">
        <title>Complete genome sequence of Lactobacillus plantarum WCFS1.</title>
        <authorList>
            <person name="Kleerebezem M."/>
            <person name="Boekhorst J."/>
            <person name="van Kranenburg R."/>
            <person name="Molenaar D."/>
            <person name="Kuipers O.P."/>
            <person name="Leer R."/>
            <person name="Tarchini R."/>
            <person name="Peters S.A."/>
            <person name="Sandbrink H.M."/>
            <person name="Fiers M.W.E.J."/>
            <person name="Stiekema W."/>
            <person name="Klein Lankhorst R.M."/>
            <person name="Bron P.A."/>
            <person name="Hoffer S.M."/>
            <person name="Nierop Groot M.N."/>
            <person name="Kerkhoven R."/>
            <person name="De Vries M."/>
            <person name="Ursing B."/>
            <person name="De Vos W.M."/>
            <person name="Siezen R.J."/>
        </authorList>
    </citation>
    <scope>NUCLEOTIDE SEQUENCE [LARGE SCALE GENOMIC DNA]</scope>
    <source>
        <strain>ATCC BAA-793 / NCIMB 8826 / WCFS1</strain>
    </source>
</reference>
<reference key="2">
    <citation type="journal article" date="2012" name="J. Bacteriol.">
        <title>Complete resequencing and reannotation of the Lactobacillus plantarum WCFS1 genome.</title>
        <authorList>
            <person name="Siezen R.J."/>
            <person name="Francke C."/>
            <person name="Renckens B."/>
            <person name="Boekhorst J."/>
            <person name="Wels M."/>
            <person name="Kleerebezem M."/>
            <person name="van Hijum S.A."/>
        </authorList>
    </citation>
    <scope>NUCLEOTIDE SEQUENCE [LARGE SCALE GENOMIC DNA]</scope>
    <scope>GENOME REANNOTATION</scope>
    <source>
        <strain>ATCC BAA-793 / NCIMB 8826 / WCFS1</strain>
    </source>
</reference>
<keyword id="KW-1185">Reference proteome</keyword>
<keyword id="KW-0687">Ribonucleoprotein</keyword>
<keyword id="KW-0689">Ribosomal protein</keyword>
<keyword id="KW-0694">RNA-binding</keyword>
<keyword id="KW-0699">rRNA-binding</keyword>
<name>RL6_LACPL</name>
<accession>Q88XX1</accession>
<accession>F9UMM0</accession>
<evidence type="ECO:0000255" key="1">
    <source>
        <dbReference type="HAMAP-Rule" id="MF_01365"/>
    </source>
</evidence>
<evidence type="ECO:0000305" key="2"/>
<organism>
    <name type="scientific">Lactiplantibacillus plantarum (strain ATCC BAA-793 / NCIMB 8826 / WCFS1)</name>
    <name type="common">Lactobacillus plantarum</name>
    <dbReference type="NCBI Taxonomy" id="220668"/>
    <lineage>
        <taxon>Bacteria</taxon>
        <taxon>Bacillati</taxon>
        <taxon>Bacillota</taxon>
        <taxon>Bacilli</taxon>
        <taxon>Lactobacillales</taxon>
        <taxon>Lactobacillaceae</taxon>
        <taxon>Lactiplantibacillus</taxon>
    </lineage>
</organism>
<comment type="function">
    <text evidence="1">This protein binds to the 23S rRNA, and is important in its secondary structure. It is located near the subunit interface in the base of the L7/L12 stalk, and near the tRNA binding site of the peptidyltransferase center.</text>
</comment>
<comment type="subunit">
    <text evidence="1">Part of the 50S ribosomal subunit.</text>
</comment>
<comment type="similarity">
    <text evidence="1">Belongs to the universal ribosomal protein uL6 family.</text>
</comment>
<gene>
    <name evidence="1" type="primary">rplF</name>
    <name type="ordered locus">lp_1051</name>
</gene>
<protein>
    <recommendedName>
        <fullName evidence="1">Large ribosomal subunit protein uL6</fullName>
    </recommendedName>
    <alternativeName>
        <fullName evidence="2">50S ribosomal protein L6</fullName>
    </alternativeName>
</protein>
<sequence length="178" mass="19350">MSRIGYKVIELPAGVEVSQAGEVVTVKGPKGTLTRNIASDITMTVEGNEVKFTRPSDDYKMKALHGTTRANVNNMVEGVTKGFTKNLQLVGVGYRAQLQGKKLVLSVGYSHPVEFATPENLTVEVPDNTHINISGIGKQAVGDFAAEVRAVRSPEPYKGKGIRYVDEYVRRKEGKTGK</sequence>